<keyword id="KW-0963">Cytoplasm</keyword>
<keyword id="KW-0238">DNA-binding</keyword>
<keyword id="KW-0804">Transcription</keyword>
<keyword id="KW-0805">Transcription regulation</keyword>
<sequence length="241" mass="25943">MAGHSKWANIQHRKGRQDEKRGAAFSKIAKEITVASKMGGGDINFNPRLRVAVDKAKGVNMPKDKIDTAIKKGTGELEGVEYIEIRYEGYGIGGAAIMVDCLTDNKVRTVAEVRHAFSKFGGNMGSDGCVAFQFKHCGQMIFAPGTDEGALMDAAIEAGADDVTTNDDGSIEVLTPPNDYMAVKDALEAAGFKPEFGEVTMKPEGENVFAGEEGVKMQKLLDALENLDDVQEIYTTAVIED</sequence>
<dbReference type="EMBL" id="CP000089">
    <property type="protein sequence ID" value="AAZ48793.1"/>
    <property type="molecule type" value="Genomic_DNA"/>
</dbReference>
<dbReference type="SMR" id="Q478D8"/>
<dbReference type="STRING" id="159087.Daro_4067"/>
<dbReference type="KEGG" id="dar:Daro_4067"/>
<dbReference type="eggNOG" id="COG0217">
    <property type="taxonomic scope" value="Bacteria"/>
</dbReference>
<dbReference type="HOGENOM" id="CLU_062974_2_2_4"/>
<dbReference type="OrthoDB" id="9781053at2"/>
<dbReference type="GO" id="GO:0005829">
    <property type="term" value="C:cytosol"/>
    <property type="evidence" value="ECO:0007669"/>
    <property type="project" value="TreeGrafter"/>
</dbReference>
<dbReference type="GO" id="GO:0003677">
    <property type="term" value="F:DNA binding"/>
    <property type="evidence" value="ECO:0007669"/>
    <property type="project" value="UniProtKB-UniRule"/>
</dbReference>
<dbReference type="GO" id="GO:0006355">
    <property type="term" value="P:regulation of DNA-templated transcription"/>
    <property type="evidence" value="ECO:0007669"/>
    <property type="project" value="UniProtKB-UniRule"/>
</dbReference>
<dbReference type="FunFam" id="1.10.10.200:FF:000002">
    <property type="entry name" value="Probable transcriptional regulatory protein CLM62_37755"/>
    <property type="match status" value="1"/>
</dbReference>
<dbReference type="FunFam" id="3.30.70.980:FF:000002">
    <property type="entry name" value="Probable transcriptional regulatory protein YebC"/>
    <property type="match status" value="1"/>
</dbReference>
<dbReference type="Gene3D" id="1.10.10.200">
    <property type="match status" value="1"/>
</dbReference>
<dbReference type="Gene3D" id="3.30.70.980">
    <property type="match status" value="2"/>
</dbReference>
<dbReference type="HAMAP" id="MF_00693">
    <property type="entry name" value="Transcrip_reg_TACO1"/>
    <property type="match status" value="1"/>
</dbReference>
<dbReference type="InterPro" id="IPR017856">
    <property type="entry name" value="Integrase-like_N"/>
</dbReference>
<dbReference type="InterPro" id="IPR048300">
    <property type="entry name" value="TACO1_YebC-like_2nd/3rd_dom"/>
</dbReference>
<dbReference type="InterPro" id="IPR049083">
    <property type="entry name" value="TACO1_YebC_N"/>
</dbReference>
<dbReference type="InterPro" id="IPR002876">
    <property type="entry name" value="Transcrip_reg_TACO1-like"/>
</dbReference>
<dbReference type="InterPro" id="IPR026564">
    <property type="entry name" value="Transcrip_reg_TACO1-like_dom3"/>
</dbReference>
<dbReference type="InterPro" id="IPR029072">
    <property type="entry name" value="YebC-like"/>
</dbReference>
<dbReference type="NCBIfam" id="NF001030">
    <property type="entry name" value="PRK00110.1"/>
    <property type="match status" value="1"/>
</dbReference>
<dbReference type="NCBIfam" id="NF009044">
    <property type="entry name" value="PRK12378.1"/>
    <property type="match status" value="1"/>
</dbReference>
<dbReference type="NCBIfam" id="TIGR01033">
    <property type="entry name" value="YebC/PmpR family DNA-binding transcriptional regulator"/>
    <property type="match status" value="1"/>
</dbReference>
<dbReference type="PANTHER" id="PTHR12532:SF6">
    <property type="entry name" value="TRANSCRIPTIONAL REGULATORY PROTEIN YEBC-RELATED"/>
    <property type="match status" value="1"/>
</dbReference>
<dbReference type="PANTHER" id="PTHR12532">
    <property type="entry name" value="TRANSLATIONAL ACTIVATOR OF CYTOCHROME C OXIDASE 1"/>
    <property type="match status" value="1"/>
</dbReference>
<dbReference type="Pfam" id="PF20772">
    <property type="entry name" value="TACO1_YebC_N"/>
    <property type="match status" value="1"/>
</dbReference>
<dbReference type="Pfam" id="PF01709">
    <property type="entry name" value="Transcrip_reg"/>
    <property type="match status" value="1"/>
</dbReference>
<dbReference type="SUPFAM" id="SSF75625">
    <property type="entry name" value="YebC-like"/>
    <property type="match status" value="1"/>
</dbReference>
<proteinExistence type="inferred from homology"/>
<protein>
    <recommendedName>
        <fullName evidence="1">Probable transcriptional regulatory protein Daro_4067</fullName>
    </recommendedName>
</protein>
<name>Y4067_DECAR</name>
<accession>Q478D8</accession>
<comment type="subcellular location">
    <subcellularLocation>
        <location evidence="1">Cytoplasm</location>
    </subcellularLocation>
</comment>
<comment type="similarity">
    <text evidence="1">Belongs to the TACO1 family.</text>
</comment>
<feature type="chain" id="PRO_0000257054" description="Probable transcriptional regulatory protein Daro_4067">
    <location>
        <begin position="1"/>
        <end position="241"/>
    </location>
</feature>
<feature type="region of interest" description="Disordered" evidence="2">
    <location>
        <begin position="1"/>
        <end position="22"/>
    </location>
</feature>
<organism>
    <name type="scientific">Dechloromonas aromatica (strain RCB)</name>
    <dbReference type="NCBI Taxonomy" id="159087"/>
    <lineage>
        <taxon>Bacteria</taxon>
        <taxon>Pseudomonadati</taxon>
        <taxon>Pseudomonadota</taxon>
        <taxon>Betaproteobacteria</taxon>
        <taxon>Rhodocyclales</taxon>
        <taxon>Azonexaceae</taxon>
        <taxon>Dechloromonas</taxon>
    </lineage>
</organism>
<gene>
    <name type="ordered locus">Daro_4067</name>
</gene>
<evidence type="ECO:0000255" key="1">
    <source>
        <dbReference type="HAMAP-Rule" id="MF_00693"/>
    </source>
</evidence>
<evidence type="ECO:0000256" key="2">
    <source>
        <dbReference type="SAM" id="MobiDB-lite"/>
    </source>
</evidence>
<reference key="1">
    <citation type="journal article" date="2009" name="BMC Genomics">
        <title>Metabolic analysis of the soil microbe Dechloromonas aromatica str. RCB: indications of a surprisingly complex life-style and cryptic anaerobic pathways for aromatic degradation.</title>
        <authorList>
            <person name="Salinero K.K."/>
            <person name="Keller K."/>
            <person name="Feil W.S."/>
            <person name="Feil H."/>
            <person name="Trong S."/>
            <person name="Di Bartolo G."/>
            <person name="Lapidus A."/>
        </authorList>
    </citation>
    <scope>NUCLEOTIDE SEQUENCE [LARGE SCALE GENOMIC DNA]</scope>
    <source>
        <strain>RCB</strain>
    </source>
</reference>